<accession>A8AP76</accession>
<gene>
    <name type="primary">rcnA</name>
    <name type="ordered locus">CKO_04230</name>
</gene>
<feature type="chain" id="PRO_0000333782" description="Nickel/cobalt efflux system RcnA">
    <location>
        <begin position="1"/>
        <end position="288"/>
    </location>
</feature>
<feature type="topological domain" description="Periplasmic" evidence="2">
    <location>
        <begin position="1"/>
        <end position="12"/>
    </location>
</feature>
<feature type="transmembrane region" description="Helical" evidence="2">
    <location>
        <begin position="13"/>
        <end position="33"/>
    </location>
</feature>
<feature type="topological domain" description="Cytoplasmic" evidence="2">
    <location>
        <begin position="34"/>
        <end position="51"/>
    </location>
</feature>
<feature type="transmembrane region" description="Helical" evidence="2">
    <location>
        <begin position="52"/>
        <end position="72"/>
    </location>
</feature>
<feature type="topological domain" description="Periplasmic" evidence="2">
    <location>
        <begin position="73"/>
        <end position="85"/>
    </location>
</feature>
<feature type="transmembrane region" description="Helical" evidence="2">
    <location>
        <begin position="86"/>
        <end position="106"/>
    </location>
</feature>
<feature type="topological domain" description="Cytoplasmic" evidence="2">
    <location>
        <begin position="107"/>
        <end position="188"/>
    </location>
</feature>
<feature type="transmembrane region" description="Helical" evidence="2">
    <location>
        <begin position="189"/>
        <end position="209"/>
    </location>
</feature>
<feature type="topological domain" description="Periplasmic" evidence="2">
    <location>
        <begin position="210"/>
        <end position="223"/>
    </location>
</feature>
<feature type="transmembrane region" description="Helical" evidence="2">
    <location>
        <begin position="224"/>
        <end position="244"/>
    </location>
</feature>
<feature type="topological domain" description="Cytoplasmic" evidence="2">
    <location>
        <begin position="245"/>
        <end position="266"/>
    </location>
</feature>
<feature type="transmembrane region" description="Helical" evidence="2">
    <location>
        <begin position="267"/>
        <end position="287"/>
    </location>
</feature>
<feature type="topological domain" description="Periplasmic" evidence="2">
    <location>
        <position position="288"/>
    </location>
</feature>
<feature type="region of interest" description="Disordered" evidence="3">
    <location>
        <begin position="125"/>
        <end position="144"/>
    </location>
</feature>
<feature type="compositionally biased region" description="Basic residues" evidence="3">
    <location>
        <begin position="125"/>
        <end position="137"/>
    </location>
</feature>
<protein>
    <recommendedName>
        <fullName>Nickel/cobalt efflux system RcnA</fullName>
    </recommendedName>
</protein>
<sequence length="288" mass="31693">MGEFSTLLQQGNAWFFIPSAILLGVLHGLEPGHSKTMMAAFIIAIKGTIKQAVMLGLAATLSHTAVVWLIALGGMYVSRAFTAESVEPWLQLVSAIIILSTAFWMFWRTWKGERDGLANRLPAHTHHHHDHEHHHHDHDHDHHHDHQHVHISLKGLTDGSHAWQDAHERAHATDIQRRFHDREVTNGQILLFGLTGGLIPCPAAITVLLICIQLKAFTLGATMVLCFSIGLALTLVAVGVGAAISVQQAAKRWSGFNTLARKAPYFSSILIGLVGLYMGMHGYLGIIR</sequence>
<proteinExistence type="inferred from homology"/>
<evidence type="ECO:0000250" key="1"/>
<evidence type="ECO:0000255" key="2"/>
<evidence type="ECO:0000256" key="3">
    <source>
        <dbReference type="SAM" id="MobiDB-lite"/>
    </source>
</evidence>
<evidence type="ECO:0000305" key="4"/>
<keyword id="KW-0997">Cell inner membrane</keyword>
<keyword id="KW-1003">Cell membrane</keyword>
<keyword id="KW-0170">Cobalt</keyword>
<keyword id="KW-0171">Cobalt transport</keyword>
<keyword id="KW-0406">Ion transport</keyword>
<keyword id="KW-0472">Membrane</keyword>
<keyword id="KW-0533">Nickel</keyword>
<keyword id="KW-0921">Nickel transport</keyword>
<keyword id="KW-1185">Reference proteome</keyword>
<keyword id="KW-0812">Transmembrane</keyword>
<keyword id="KW-1133">Transmembrane helix</keyword>
<keyword id="KW-0813">Transport</keyword>
<comment type="function">
    <text evidence="1">Efflux system for nickel and cobalt.</text>
</comment>
<comment type="subcellular location">
    <subcellularLocation>
        <location evidence="1">Cell inner membrane</location>
        <topology evidence="1">Multi-pass membrane protein</topology>
    </subcellularLocation>
</comment>
<comment type="induction">
    <text evidence="1">By nickel and cobalt. Transcriptionally repressed by RcnR (By similarity).</text>
</comment>
<comment type="similarity">
    <text evidence="4">Belongs to the NiCoT transporter (TC 2.A.52) family. RcnA subfamily.</text>
</comment>
<comment type="sequence caution" evidence="4">
    <conflict type="erroneous initiation">
        <sequence resource="EMBL-CDS" id="ABV15289"/>
    </conflict>
</comment>
<organism>
    <name type="scientific">Citrobacter koseri (strain ATCC BAA-895 / CDC 4225-83 / SGSC4696)</name>
    <dbReference type="NCBI Taxonomy" id="290338"/>
    <lineage>
        <taxon>Bacteria</taxon>
        <taxon>Pseudomonadati</taxon>
        <taxon>Pseudomonadota</taxon>
        <taxon>Gammaproteobacteria</taxon>
        <taxon>Enterobacterales</taxon>
        <taxon>Enterobacteriaceae</taxon>
        <taxon>Citrobacter</taxon>
    </lineage>
</organism>
<reference key="1">
    <citation type="submission" date="2007-08" db="EMBL/GenBank/DDBJ databases">
        <authorList>
            <consortium name="The Citrobacter koseri Genome Sequencing Project"/>
            <person name="McClelland M."/>
            <person name="Sanderson E.K."/>
            <person name="Porwollik S."/>
            <person name="Spieth J."/>
            <person name="Clifton W.S."/>
            <person name="Latreille P."/>
            <person name="Courtney L."/>
            <person name="Wang C."/>
            <person name="Pepin K."/>
            <person name="Bhonagiri V."/>
            <person name="Nash W."/>
            <person name="Johnson M."/>
            <person name="Thiruvilangam P."/>
            <person name="Wilson R."/>
        </authorList>
    </citation>
    <scope>NUCLEOTIDE SEQUENCE [LARGE SCALE GENOMIC DNA]</scope>
    <source>
        <strain>ATCC BAA-895 / CDC 4225-83 / SGSC4696</strain>
    </source>
</reference>
<name>RCNA_CITK8</name>
<dbReference type="EMBL" id="CP000822">
    <property type="protein sequence ID" value="ABV15289.1"/>
    <property type="status" value="ALT_INIT"/>
    <property type="molecule type" value="Genomic_DNA"/>
</dbReference>
<dbReference type="RefSeq" id="WP_024130914.1">
    <property type="nucleotide sequence ID" value="NC_009792.1"/>
</dbReference>
<dbReference type="STRING" id="290338.CKO_04230"/>
<dbReference type="GeneID" id="45137840"/>
<dbReference type="KEGG" id="cko:CKO_04230"/>
<dbReference type="HOGENOM" id="CLU_058605_2_0_6"/>
<dbReference type="OrthoDB" id="271709at2"/>
<dbReference type="Proteomes" id="UP000008148">
    <property type="component" value="Chromosome"/>
</dbReference>
<dbReference type="GO" id="GO:0005886">
    <property type="term" value="C:plasma membrane"/>
    <property type="evidence" value="ECO:0007669"/>
    <property type="project" value="UniProtKB-SubCell"/>
</dbReference>
<dbReference type="GO" id="GO:0046583">
    <property type="term" value="F:monoatomic cation efflux transmembrane transporter activity"/>
    <property type="evidence" value="ECO:0007669"/>
    <property type="project" value="TreeGrafter"/>
</dbReference>
<dbReference type="GO" id="GO:0015099">
    <property type="term" value="F:nickel cation transmembrane transporter activity"/>
    <property type="evidence" value="ECO:0007669"/>
    <property type="project" value="InterPro"/>
</dbReference>
<dbReference type="GO" id="GO:0006824">
    <property type="term" value="P:cobalt ion transport"/>
    <property type="evidence" value="ECO:0007669"/>
    <property type="project" value="UniProtKB-KW"/>
</dbReference>
<dbReference type="GO" id="GO:0032025">
    <property type="term" value="P:response to cobalt ion"/>
    <property type="evidence" value="ECO:0007669"/>
    <property type="project" value="TreeGrafter"/>
</dbReference>
<dbReference type="GO" id="GO:0010045">
    <property type="term" value="P:response to nickel cation"/>
    <property type="evidence" value="ECO:0007669"/>
    <property type="project" value="TreeGrafter"/>
</dbReference>
<dbReference type="InterPro" id="IPR011541">
    <property type="entry name" value="Ni/Co_transpt_high_affinity"/>
</dbReference>
<dbReference type="InterPro" id="IPR051224">
    <property type="entry name" value="NiCoT_RcnA"/>
</dbReference>
<dbReference type="NCBIfam" id="NF007454">
    <property type="entry name" value="PRK10019.1"/>
    <property type="match status" value="1"/>
</dbReference>
<dbReference type="PANTHER" id="PTHR40659">
    <property type="entry name" value="NICKEL/COBALT EFFLUX SYSTEM RCNA"/>
    <property type="match status" value="1"/>
</dbReference>
<dbReference type="PANTHER" id="PTHR40659:SF1">
    <property type="entry name" value="NICKEL_COBALT EFFLUX SYSTEM RCNA"/>
    <property type="match status" value="1"/>
</dbReference>
<dbReference type="Pfam" id="PF03824">
    <property type="entry name" value="NicO"/>
    <property type="match status" value="1"/>
</dbReference>